<feature type="chain" id="PRO_0000194851" description="COP9 signalosome complex subunit 5">
    <location>
        <begin position="1"/>
        <end position="469"/>
    </location>
</feature>
<feature type="domain" description="MPN" evidence="2">
    <location>
        <begin position="63"/>
        <end position="200"/>
    </location>
</feature>
<feature type="region of interest" description="Disordered" evidence="3">
    <location>
        <begin position="201"/>
        <end position="220"/>
    </location>
</feature>
<feature type="region of interest" description="Disordered" evidence="3">
    <location>
        <begin position="331"/>
        <end position="404"/>
    </location>
</feature>
<feature type="short sequence motif" description="JAMM motif" evidence="2">
    <location>
        <begin position="146"/>
        <end position="159"/>
    </location>
</feature>
<feature type="compositionally biased region" description="Acidic residues" evidence="3">
    <location>
        <begin position="344"/>
        <end position="353"/>
    </location>
</feature>
<feature type="binding site" evidence="2">
    <location>
        <position position="146"/>
    </location>
    <ligand>
        <name>Zn(2+)</name>
        <dbReference type="ChEBI" id="CHEBI:29105"/>
        <note>catalytic</note>
    </ligand>
</feature>
<feature type="binding site" evidence="2">
    <location>
        <position position="148"/>
    </location>
    <ligand>
        <name>Zn(2+)</name>
        <dbReference type="ChEBI" id="CHEBI:29105"/>
        <note>catalytic</note>
    </ligand>
</feature>
<feature type="binding site" evidence="2">
    <location>
        <position position="159"/>
    </location>
    <ligand>
        <name>Zn(2+)</name>
        <dbReference type="ChEBI" id="CHEBI:29105"/>
        <note>catalytic</note>
    </ligand>
</feature>
<organism>
    <name type="scientific">Debaryomyces hansenii (strain ATCC 36239 / CBS 767 / BCRC 21394 / JCM 1990 / NBRC 0083 / IGC 2968)</name>
    <name type="common">Yeast</name>
    <name type="synonym">Torulaspora hansenii</name>
    <dbReference type="NCBI Taxonomy" id="284592"/>
    <lineage>
        <taxon>Eukaryota</taxon>
        <taxon>Fungi</taxon>
        <taxon>Dikarya</taxon>
        <taxon>Ascomycota</taxon>
        <taxon>Saccharomycotina</taxon>
        <taxon>Pichiomycetes</taxon>
        <taxon>Debaryomycetaceae</taxon>
        <taxon>Debaryomyces</taxon>
    </lineage>
</organism>
<comment type="function">
    <text evidence="1">Catalytic Component of the COP9 signalosome (CSN) complex that acts as an regulator of the ubiquitin (Ubl) conjugation pathway by mediating the deneddylation of the cullin subunit of SCF-type E3 ubiquitin-protein ligase complexes. The CSN complex is involved in the regulation of the mating pheromone response.</text>
</comment>
<comment type="subunit">
    <text evidence="1">Component of the COP9 signalosome (CSN) complex.</text>
</comment>
<comment type="subcellular location">
    <subcellularLocation>
        <location evidence="1">Cytoplasm</location>
    </subcellularLocation>
    <subcellularLocation>
        <location evidence="1">Nucleus</location>
    </subcellularLocation>
</comment>
<comment type="domain">
    <text evidence="1">The JAMM motif is essential for the protease activity of the CSN complex resulting in deneddylation of cullins. It constitutes the catalytic center of the complex (By similarity).</text>
</comment>
<comment type="similarity">
    <text evidence="4">Belongs to the peptidase M67A family. CSN5 subfamily.</text>
</comment>
<keyword id="KW-0963">Cytoplasm</keyword>
<keyword id="KW-0378">Hydrolase</keyword>
<keyword id="KW-0479">Metal-binding</keyword>
<keyword id="KW-0482">Metalloprotease</keyword>
<keyword id="KW-0539">Nucleus</keyword>
<keyword id="KW-0645">Protease</keyword>
<keyword id="KW-1185">Reference proteome</keyword>
<keyword id="KW-0736">Signalosome</keyword>
<keyword id="KW-0862">Zinc</keyword>
<name>CSN5_DEBHA</name>
<accession>Q6BMQ3</accession>
<proteinExistence type="inferred from homology"/>
<reference key="1">
    <citation type="journal article" date="2004" name="Nature">
        <title>Genome evolution in yeasts.</title>
        <authorList>
            <person name="Dujon B."/>
            <person name="Sherman D."/>
            <person name="Fischer G."/>
            <person name="Durrens P."/>
            <person name="Casaregola S."/>
            <person name="Lafontaine I."/>
            <person name="de Montigny J."/>
            <person name="Marck C."/>
            <person name="Neuveglise C."/>
            <person name="Talla E."/>
            <person name="Goffard N."/>
            <person name="Frangeul L."/>
            <person name="Aigle M."/>
            <person name="Anthouard V."/>
            <person name="Babour A."/>
            <person name="Barbe V."/>
            <person name="Barnay S."/>
            <person name="Blanchin S."/>
            <person name="Beckerich J.-M."/>
            <person name="Beyne E."/>
            <person name="Bleykasten C."/>
            <person name="Boisrame A."/>
            <person name="Boyer J."/>
            <person name="Cattolico L."/>
            <person name="Confanioleri F."/>
            <person name="de Daruvar A."/>
            <person name="Despons L."/>
            <person name="Fabre E."/>
            <person name="Fairhead C."/>
            <person name="Ferry-Dumazet H."/>
            <person name="Groppi A."/>
            <person name="Hantraye F."/>
            <person name="Hennequin C."/>
            <person name="Jauniaux N."/>
            <person name="Joyet P."/>
            <person name="Kachouri R."/>
            <person name="Kerrest A."/>
            <person name="Koszul R."/>
            <person name="Lemaire M."/>
            <person name="Lesur I."/>
            <person name="Ma L."/>
            <person name="Muller H."/>
            <person name="Nicaud J.-M."/>
            <person name="Nikolski M."/>
            <person name="Oztas S."/>
            <person name="Ozier-Kalogeropoulos O."/>
            <person name="Pellenz S."/>
            <person name="Potier S."/>
            <person name="Richard G.-F."/>
            <person name="Straub M.-L."/>
            <person name="Suleau A."/>
            <person name="Swennen D."/>
            <person name="Tekaia F."/>
            <person name="Wesolowski-Louvel M."/>
            <person name="Westhof E."/>
            <person name="Wirth B."/>
            <person name="Zeniou-Meyer M."/>
            <person name="Zivanovic Y."/>
            <person name="Bolotin-Fukuhara M."/>
            <person name="Thierry A."/>
            <person name="Bouchier C."/>
            <person name="Caudron B."/>
            <person name="Scarpelli C."/>
            <person name="Gaillardin C."/>
            <person name="Weissenbach J."/>
            <person name="Wincker P."/>
            <person name="Souciet J.-L."/>
        </authorList>
    </citation>
    <scope>NUCLEOTIDE SEQUENCE [LARGE SCALE GENOMIC DNA]</scope>
    <source>
        <strain>ATCC 36239 / CBS 767 / BCRC 21394 / JCM 1990 / NBRC 0083 / IGC 2968</strain>
    </source>
</reference>
<protein>
    <recommendedName>
        <fullName>COP9 signalosome complex subunit 5</fullName>
        <ecNumber>3.4.-.-</ecNumber>
    </recommendedName>
</protein>
<evidence type="ECO:0000250" key="1"/>
<evidence type="ECO:0000255" key="2">
    <source>
        <dbReference type="PROSITE-ProRule" id="PRU01182"/>
    </source>
</evidence>
<evidence type="ECO:0000256" key="3">
    <source>
        <dbReference type="SAM" id="MobiDB-lite"/>
    </source>
</evidence>
<evidence type="ECO:0000305" key="4"/>
<sequence length="469" mass="53126">MRCIHELADVFINDSDERILTQSLDATEIDKHADYESFFSINSDESIMKARPWKSNAKYFKKTYISSLALCKMSVHAKSGGAIEVMGMMTGKIIKNSIIVMDVYPLPVEGTETRVNAQAEGYEYMVQYLENSKQVGRDENIVGWYHSHPGYGCWLSGIDVATQSLNQNFQDPYLAIVIDPMKTEDQGKVEIGAFRTFPDNYKSPDSAAPTNNTRGVPPSKQKDFGVHSDKYYSLDIQIFKSNLDTEILNIISNKSWIGKLIKSVNTANHQEQNMIENVFKLINKLQKKEVNQLNRFEISFIKKFDLIFEDIISKKLMNDNRFYSTISQSSYDSFSGHGNSSSNDEMDDESDLDDRDKSSAPLDISDTGNDDVMSMESSVNVYTDKRGDDNDDDDDNDGYDKRPMYTNYRSRANLTKPRKSGSSPEEHVKLSNNVNKTITNISNHSKDIGLTELQDLIALKTKESIFLGK</sequence>
<gene>
    <name type="primary">RRI1</name>
    <name type="synonym">CSN5</name>
    <name type="ordered locus">DEHA2F03498g</name>
</gene>
<dbReference type="EC" id="3.4.-.-"/>
<dbReference type="EMBL" id="CR382138">
    <property type="protein sequence ID" value="CAG88831.2"/>
    <property type="molecule type" value="Genomic_DNA"/>
</dbReference>
<dbReference type="RefSeq" id="XP_460518.2">
    <property type="nucleotide sequence ID" value="XM_460518.1"/>
</dbReference>
<dbReference type="SMR" id="Q6BMQ3"/>
<dbReference type="FunCoup" id="Q6BMQ3">
    <property type="interactions" value="54"/>
</dbReference>
<dbReference type="STRING" id="284592.Q6BMQ3"/>
<dbReference type="MEROPS" id="M67.A01"/>
<dbReference type="GeneID" id="2903422"/>
<dbReference type="KEGG" id="dha:DEHA2F03498g"/>
<dbReference type="VEuPathDB" id="FungiDB:DEHA2F03498g"/>
<dbReference type="eggNOG" id="KOG1554">
    <property type="taxonomic scope" value="Eukaryota"/>
</dbReference>
<dbReference type="HOGENOM" id="CLU_031199_0_0_1"/>
<dbReference type="InParanoid" id="Q6BMQ3"/>
<dbReference type="OMA" id="RCIHELA"/>
<dbReference type="OrthoDB" id="605656at2759"/>
<dbReference type="Proteomes" id="UP000000599">
    <property type="component" value="Chromosome F"/>
</dbReference>
<dbReference type="GO" id="GO:0008180">
    <property type="term" value="C:COP9 signalosome"/>
    <property type="evidence" value="ECO:0007669"/>
    <property type="project" value="UniProtKB-KW"/>
</dbReference>
<dbReference type="GO" id="GO:0005737">
    <property type="term" value="C:cytoplasm"/>
    <property type="evidence" value="ECO:0007669"/>
    <property type="project" value="UniProtKB-SubCell"/>
</dbReference>
<dbReference type="GO" id="GO:0046872">
    <property type="term" value="F:metal ion binding"/>
    <property type="evidence" value="ECO:0007669"/>
    <property type="project" value="UniProtKB-KW"/>
</dbReference>
<dbReference type="GO" id="GO:0008237">
    <property type="term" value="F:metallopeptidase activity"/>
    <property type="evidence" value="ECO:0007669"/>
    <property type="project" value="UniProtKB-KW"/>
</dbReference>
<dbReference type="GO" id="GO:0006508">
    <property type="term" value="P:proteolysis"/>
    <property type="evidence" value="ECO:0007669"/>
    <property type="project" value="UniProtKB-KW"/>
</dbReference>
<dbReference type="CDD" id="cd08069">
    <property type="entry name" value="MPN_RPN11_CSN5"/>
    <property type="match status" value="1"/>
</dbReference>
<dbReference type="FunFam" id="3.40.140.10:FF:000203">
    <property type="entry name" value="COP9 signalosome complex subunit 5"/>
    <property type="match status" value="1"/>
</dbReference>
<dbReference type="Gene3D" id="3.40.140.10">
    <property type="entry name" value="Cytidine Deaminase, domain 2"/>
    <property type="match status" value="1"/>
</dbReference>
<dbReference type="InterPro" id="IPR000555">
    <property type="entry name" value="JAMM/MPN+_dom"/>
</dbReference>
<dbReference type="InterPro" id="IPR050242">
    <property type="entry name" value="JAMM_MPN+_peptidase_M67A"/>
</dbReference>
<dbReference type="InterPro" id="IPR037518">
    <property type="entry name" value="MPN"/>
</dbReference>
<dbReference type="PANTHER" id="PTHR10410">
    <property type="entry name" value="EUKARYOTIC TRANSLATION INITIATION FACTOR 3 -RELATED"/>
    <property type="match status" value="1"/>
</dbReference>
<dbReference type="Pfam" id="PF01398">
    <property type="entry name" value="JAB"/>
    <property type="match status" value="1"/>
</dbReference>
<dbReference type="SMART" id="SM00232">
    <property type="entry name" value="JAB_MPN"/>
    <property type="match status" value="1"/>
</dbReference>
<dbReference type="SUPFAM" id="SSF102712">
    <property type="entry name" value="JAB1/MPN domain"/>
    <property type="match status" value="1"/>
</dbReference>
<dbReference type="PROSITE" id="PS50249">
    <property type="entry name" value="MPN"/>
    <property type="match status" value="1"/>
</dbReference>